<reference key="1">
    <citation type="journal article" date="2008" name="J. Bacteriol.">
        <title>The complete genome sequence of Actinobacillus pleuropneumoniae L20 (serotype 5b).</title>
        <authorList>
            <person name="Foote S.J."/>
            <person name="Bosse J.T."/>
            <person name="Bouevitch A.B."/>
            <person name="Langford P.R."/>
            <person name="Young N.M."/>
            <person name="Nash J.H.E."/>
        </authorList>
    </citation>
    <scope>NUCLEOTIDE SEQUENCE [LARGE SCALE GENOMIC DNA]</scope>
    <source>
        <strain>L20</strain>
    </source>
</reference>
<protein>
    <recommendedName>
        <fullName evidence="1">Holliday junction branch migration complex subunit RuvB</fullName>
        <ecNumber evidence="1">3.6.4.-</ecNumber>
    </recommendedName>
</protein>
<feature type="chain" id="PRO_0000322777" description="Holliday junction branch migration complex subunit RuvB">
    <location>
        <begin position="1"/>
        <end position="334"/>
    </location>
</feature>
<feature type="region of interest" description="Large ATPase domain (RuvB-L)" evidence="1">
    <location>
        <begin position="4"/>
        <end position="184"/>
    </location>
</feature>
<feature type="region of interest" description="Small ATPAse domain (RuvB-S)" evidence="1">
    <location>
        <begin position="185"/>
        <end position="255"/>
    </location>
</feature>
<feature type="region of interest" description="Head domain (RuvB-H)" evidence="1">
    <location>
        <begin position="258"/>
        <end position="334"/>
    </location>
</feature>
<feature type="binding site" evidence="1">
    <location>
        <position position="23"/>
    </location>
    <ligand>
        <name>ATP</name>
        <dbReference type="ChEBI" id="CHEBI:30616"/>
    </ligand>
</feature>
<feature type="binding site" evidence="1">
    <location>
        <position position="24"/>
    </location>
    <ligand>
        <name>ATP</name>
        <dbReference type="ChEBI" id="CHEBI:30616"/>
    </ligand>
</feature>
<feature type="binding site" evidence="1">
    <location>
        <position position="65"/>
    </location>
    <ligand>
        <name>ATP</name>
        <dbReference type="ChEBI" id="CHEBI:30616"/>
    </ligand>
</feature>
<feature type="binding site" evidence="1">
    <location>
        <position position="68"/>
    </location>
    <ligand>
        <name>ATP</name>
        <dbReference type="ChEBI" id="CHEBI:30616"/>
    </ligand>
</feature>
<feature type="binding site" evidence="1">
    <location>
        <position position="69"/>
    </location>
    <ligand>
        <name>ATP</name>
        <dbReference type="ChEBI" id="CHEBI:30616"/>
    </ligand>
</feature>
<feature type="binding site" evidence="1">
    <location>
        <position position="69"/>
    </location>
    <ligand>
        <name>Mg(2+)</name>
        <dbReference type="ChEBI" id="CHEBI:18420"/>
    </ligand>
</feature>
<feature type="binding site" evidence="1">
    <location>
        <position position="70"/>
    </location>
    <ligand>
        <name>ATP</name>
        <dbReference type="ChEBI" id="CHEBI:30616"/>
    </ligand>
</feature>
<feature type="binding site" evidence="1">
    <location>
        <begin position="131"/>
        <end position="133"/>
    </location>
    <ligand>
        <name>ATP</name>
        <dbReference type="ChEBI" id="CHEBI:30616"/>
    </ligand>
</feature>
<feature type="binding site" evidence="1">
    <location>
        <position position="174"/>
    </location>
    <ligand>
        <name>ATP</name>
        <dbReference type="ChEBI" id="CHEBI:30616"/>
    </ligand>
</feature>
<feature type="binding site" evidence="1">
    <location>
        <position position="184"/>
    </location>
    <ligand>
        <name>ATP</name>
        <dbReference type="ChEBI" id="CHEBI:30616"/>
    </ligand>
</feature>
<feature type="binding site" evidence="1">
    <location>
        <position position="221"/>
    </location>
    <ligand>
        <name>ATP</name>
        <dbReference type="ChEBI" id="CHEBI:30616"/>
    </ligand>
</feature>
<feature type="binding site" evidence="1">
    <location>
        <position position="294"/>
    </location>
    <ligand>
        <name>DNA</name>
        <dbReference type="ChEBI" id="CHEBI:16991"/>
    </ligand>
</feature>
<feature type="binding site" evidence="1">
    <location>
        <position position="313"/>
    </location>
    <ligand>
        <name>DNA</name>
        <dbReference type="ChEBI" id="CHEBI:16991"/>
    </ligand>
</feature>
<feature type="binding site" evidence="1">
    <location>
        <position position="318"/>
    </location>
    <ligand>
        <name>DNA</name>
        <dbReference type="ChEBI" id="CHEBI:16991"/>
    </ligand>
</feature>
<comment type="function">
    <text evidence="1">The RuvA-RuvB-RuvC complex processes Holliday junction (HJ) DNA during genetic recombination and DNA repair, while the RuvA-RuvB complex plays an important role in the rescue of blocked DNA replication forks via replication fork reversal (RFR). RuvA specifically binds to HJ cruciform DNA, conferring on it an open structure. The RuvB hexamer acts as an ATP-dependent pump, pulling dsDNA into and through the RuvAB complex. RuvB forms 2 homohexamers on either side of HJ DNA bound by 1 or 2 RuvA tetramers; 4 subunits per hexamer contact DNA at a time. Coordinated motions by a converter formed by DNA-disengaged RuvB subunits stimulates ATP hydrolysis and nucleotide exchange. Immobilization of the converter enables RuvB to convert the ATP-contained energy into a lever motion, pulling 2 nucleotides of DNA out of the RuvA tetramer per ATP hydrolyzed, thus driving DNA branch migration. The RuvB motors rotate together with the DNA substrate, which together with the progressing nucleotide cycle form the mechanistic basis for DNA recombination by continuous HJ branch migration. Branch migration allows RuvC to scan DNA until it finds its consensus sequence, where it cleaves and resolves cruciform DNA.</text>
</comment>
<comment type="catalytic activity">
    <reaction evidence="1">
        <text>ATP + H2O = ADP + phosphate + H(+)</text>
        <dbReference type="Rhea" id="RHEA:13065"/>
        <dbReference type="ChEBI" id="CHEBI:15377"/>
        <dbReference type="ChEBI" id="CHEBI:15378"/>
        <dbReference type="ChEBI" id="CHEBI:30616"/>
        <dbReference type="ChEBI" id="CHEBI:43474"/>
        <dbReference type="ChEBI" id="CHEBI:456216"/>
    </reaction>
</comment>
<comment type="subunit">
    <text evidence="1">Homohexamer. Forms an RuvA(8)-RuvB(12)-Holliday junction (HJ) complex. HJ DNA is sandwiched between 2 RuvA tetramers; dsDNA enters through RuvA and exits via RuvB. An RuvB hexamer assembles on each DNA strand where it exits the tetramer. Each RuvB hexamer is contacted by two RuvA subunits (via domain III) on 2 adjacent RuvB subunits; this complex drives branch migration. In the full resolvosome a probable DNA-RuvA(4)-RuvB(12)-RuvC(2) complex forms which resolves the HJ.</text>
</comment>
<comment type="subcellular location">
    <subcellularLocation>
        <location evidence="1">Cytoplasm</location>
    </subcellularLocation>
</comment>
<comment type="domain">
    <text evidence="1">Has 3 domains, the large (RuvB-L) and small ATPase (RuvB-S) domains and the C-terminal head (RuvB-H) domain. The head domain binds DNA, while the ATPase domains jointly bind ATP, ADP or are empty depending on the state of the subunit in the translocation cycle. During a single DNA translocation step the structure of each domain remains the same, but their relative positions change.</text>
</comment>
<comment type="similarity">
    <text evidence="1">Belongs to the RuvB family.</text>
</comment>
<comment type="sequence caution" evidence="2">
    <conflict type="erroneous initiation">
        <sequence resource="EMBL-CDS" id="ABN73392"/>
    </conflict>
    <text>Extended N-terminus.</text>
</comment>
<keyword id="KW-0067">ATP-binding</keyword>
<keyword id="KW-0963">Cytoplasm</keyword>
<keyword id="KW-0227">DNA damage</keyword>
<keyword id="KW-0233">DNA recombination</keyword>
<keyword id="KW-0234">DNA repair</keyword>
<keyword id="KW-0238">DNA-binding</keyword>
<keyword id="KW-0378">Hydrolase</keyword>
<keyword id="KW-0547">Nucleotide-binding</keyword>
<keyword id="KW-1185">Reference proteome</keyword>
<sequence>MIEADRIISASPKREEEVIDRAIRPKLLADYVGQPSVREQMEIFIKAAKLRDEALDHLLIFGPPGLGKTTLANIVANEMGVNIRTTSGPVLEKAGDLAAMLTNLEPYDVLFIDEIHRLSPAIEEVLYPAMEDYQLDIMIGEGPAARSIKLDLPPFTLVGATTRAGSLTSPLRDRFGIVQRLEFYSVDDLTSIVKRSADCLNLNLSPDGAYEVARRSRGTPRIANRLLRRVRDYADVRNNGVITSDIAKQALAMLDVDSEGFDFMDIKLLQAIVERFDGGPVGLDNLAAAIGEERDTIEDVLEPYLIQQGFLQRTPRGRIATSRTYAHLGIAKLD</sequence>
<proteinExistence type="inferred from homology"/>
<evidence type="ECO:0000255" key="1">
    <source>
        <dbReference type="HAMAP-Rule" id="MF_00016"/>
    </source>
</evidence>
<evidence type="ECO:0000305" key="2"/>
<accession>A3MZ06</accession>
<dbReference type="EC" id="3.6.4.-" evidence="1"/>
<dbReference type="EMBL" id="CP000569">
    <property type="protein sequence ID" value="ABN73392.1"/>
    <property type="status" value="ALT_INIT"/>
    <property type="molecule type" value="Genomic_DNA"/>
</dbReference>
<dbReference type="RefSeq" id="WP_005600359.1">
    <property type="nucleotide sequence ID" value="NC_009053.1"/>
</dbReference>
<dbReference type="SMR" id="A3MZ06"/>
<dbReference type="STRING" id="416269.APL_0284"/>
<dbReference type="EnsemblBacteria" id="ABN73392">
    <property type="protein sequence ID" value="ABN73392"/>
    <property type="gene ID" value="APL_0284"/>
</dbReference>
<dbReference type="GeneID" id="34290936"/>
<dbReference type="KEGG" id="apl:APL_0284"/>
<dbReference type="eggNOG" id="COG2255">
    <property type="taxonomic scope" value="Bacteria"/>
</dbReference>
<dbReference type="HOGENOM" id="CLU_055599_1_0_6"/>
<dbReference type="Proteomes" id="UP000001432">
    <property type="component" value="Chromosome"/>
</dbReference>
<dbReference type="GO" id="GO:0005737">
    <property type="term" value="C:cytoplasm"/>
    <property type="evidence" value="ECO:0007669"/>
    <property type="project" value="UniProtKB-SubCell"/>
</dbReference>
<dbReference type="GO" id="GO:0048476">
    <property type="term" value="C:Holliday junction resolvase complex"/>
    <property type="evidence" value="ECO:0007669"/>
    <property type="project" value="UniProtKB-UniRule"/>
</dbReference>
<dbReference type="GO" id="GO:0005524">
    <property type="term" value="F:ATP binding"/>
    <property type="evidence" value="ECO:0007669"/>
    <property type="project" value="UniProtKB-UniRule"/>
</dbReference>
<dbReference type="GO" id="GO:0016887">
    <property type="term" value="F:ATP hydrolysis activity"/>
    <property type="evidence" value="ECO:0007669"/>
    <property type="project" value="InterPro"/>
</dbReference>
<dbReference type="GO" id="GO:0000400">
    <property type="term" value="F:four-way junction DNA binding"/>
    <property type="evidence" value="ECO:0007669"/>
    <property type="project" value="UniProtKB-UniRule"/>
</dbReference>
<dbReference type="GO" id="GO:0009378">
    <property type="term" value="F:four-way junction helicase activity"/>
    <property type="evidence" value="ECO:0007669"/>
    <property type="project" value="InterPro"/>
</dbReference>
<dbReference type="GO" id="GO:0006310">
    <property type="term" value="P:DNA recombination"/>
    <property type="evidence" value="ECO:0007669"/>
    <property type="project" value="UniProtKB-UniRule"/>
</dbReference>
<dbReference type="GO" id="GO:0006281">
    <property type="term" value="P:DNA repair"/>
    <property type="evidence" value="ECO:0007669"/>
    <property type="project" value="UniProtKB-UniRule"/>
</dbReference>
<dbReference type="CDD" id="cd00009">
    <property type="entry name" value="AAA"/>
    <property type="match status" value="1"/>
</dbReference>
<dbReference type="FunFam" id="1.10.10.10:FF:000086">
    <property type="entry name" value="Holliday junction ATP-dependent DNA helicase RuvB"/>
    <property type="match status" value="1"/>
</dbReference>
<dbReference type="FunFam" id="1.10.8.60:FF:000023">
    <property type="entry name" value="Holliday junction ATP-dependent DNA helicase RuvB"/>
    <property type="match status" value="1"/>
</dbReference>
<dbReference type="FunFam" id="3.40.50.300:FF:000073">
    <property type="entry name" value="Holliday junction ATP-dependent DNA helicase RuvB"/>
    <property type="match status" value="1"/>
</dbReference>
<dbReference type="Gene3D" id="1.10.8.60">
    <property type="match status" value="1"/>
</dbReference>
<dbReference type="Gene3D" id="3.40.50.300">
    <property type="entry name" value="P-loop containing nucleotide triphosphate hydrolases"/>
    <property type="match status" value="1"/>
</dbReference>
<dbReference type="Gene3D" id="1.10.10.10">
    <property type="entry name" value="Winged helix-like DNA-binding domain superfamily/Winged helix DNA-binding domain"/>
    <property type="match status" value="1"/>
</dbReference>
<dbReference type="HAMAP" id="MF_00016">
    <property type="entry name" value="DNA_HJ_migration_RuvB"/>
    <property type="match status" value="1"/>
</dbReference>
<dbReference type="InterPro" id="IPR003593">
    <property type="entry name" value="AAA+_ATPase"/>
</dbReference>
<dbReference type="InterPro" id="IPR041445">
    <property type="entry name" value="AAA_lid_4"/>
</dbReference>
<dbReference type="InterPro" id="IPR004605">
    <property type="entry name" value="DNA_helicase_Holl-junc_RuvB"/>
</dbReference>
<dbReference type="InterPro" id="IPR027417">
    <property type="entry name" value="P-loop_NTPase"/>
</dbReference>
<dbReference type="InterPro" id="IPR008824">
    <property type="entry name" value="RuvB-like_N"/>
</dbReference>
<dbReference type="InterPro" id="IPR008823">
    <property type="entry name" value="RuvB_C"/>
</dbReference>
<dbReference type="InterPro" id="IPR036388">
    <property type="entry name" value="WH-like_DNA-bd_sf"/>
</dbReference>
<dbReference type="InterPro" id="IPR036390">
    <property type="entry name" value="WH_DNA-bd_sf"/>
</dbReference>
<dbReference type="NCBIfam" id="NF000868">
    <property type="entry name" value="PRK00080.1"/>
    <property type="match status" value="1"/>
</dbReference>
<dbReference type="NCBIfam" id="TIGR00635">
    <property type="entry name" value="ruvB"/>
    <property type="match status" value="1"/>
</dbReference>
<dbReference type="PANTHER" id="PTHR42848">
    <property type="match status" value="1"/>
</dbReference>
<dbReference type="PANTHER" id="PTHR42848:SF1">
    <property type="entry name" value="HOLLIDAY JUNCTION BRANCH MIGRATION COMPLEX SUBUNIT RUVB"/>
    <property type="match status" value="1"/>
</dbReference>
<dbReference type="Pfam" id="PF17864">
    <property type="entry name" value="AAA_lid_4"/>
    <property type="match status" value="1"/>
</dbReference>
<dbReference type="Pfam" id="PF05491">
    <property type="entry name" value="RuvB_C"/>
    <property type="match status" value="1"/>
</dbReference>
<dbReference type="Pfam" id="PF05496">
    <property type="entry name" value="RuvB_N"/>
    <property type="match status" value="1"/>
</dbReference>
<dbReference type="SMART" id="SM00382">
    <property type="entry name" value="AAA"/>
    <property type="match status" value="1"/>
</dbReference>
<dbReference type="SUPFAM" id="SSF52540">
    <property type="entry name" value="P-loop containing nucleoside triphosphate hydrolases"/>
    <property type="match status" value="1"/>
</dbReference>
<dbReference type="SUPFAM" id="SSF46785">
    <property type="entry name" value="Winged helix' DNA-binding domain"/>
    <property type="match status" value="1"/>
</dbReference>
<gene>
    <name evidence="1" type="primary">ruvB</name>
    <name type="ordered locus">APL_0284</name>
</gene>
<name>RUVB_ACTP2</name>
<organism>
    <name type="scientific">Actinobacillus pleuropneumoniae serotype 5b (strain L20)</name>
    <dbReference type="NCBI Taxonomy" id="416269"/>
    <lineage>
        <taxon>Bacteria</taxon>
        <taxon>Pseudomonadati</taxon>
        <taxon>Pseudomonadota</taxon>
        <taxon>Gammaproteobacteria</taxon>
        <taxon>Pasteurellales</taxon>
        <taxon>Pasteurellaceae</taxon>
        <taxon>Actinobacillus</taxon>
    </lineage>
</organism>